<keyword id="KW-1185">Reference proteome</keyword>
<keyword id="KW-0687">Ribonucleoprotein</keyword>
<keyword id="KW-0689">Ribosomal protein</keyword>
<keyword id="KW-0694">RNA-binding</keyword>
<keyword id="KW-0699">rRNA-binding</keyword>
<gene>
    <name evidence="1" type="primary">rpsK</name>
    <name type="ordered locus">PG_1913</name>
</gene>
<evidence type="ECO:0000255" key="1">
    <source>
        <dbReference type="HAMAP-Rule" id="MF_01310"/>
    </source>
</evidence>
<evidence type="ECO:0000305" key="2"/>
<feature type="chain" id="PRO_0000123196" description="Small ribosomal subunit protein uS11">
    <location>
        <begin position="1"/>
        <end position="128"/>
    </location>
</feature>
<sequence length="128" mass="13832">MAKKAVAKKKVVRVEAVGQAHIHSSFNNIIISLANSEGQVISWSSAGKMGFRSSKKNTPYAAQMAAQDCAKVAYDMGLRKVTVYVKGPGNGRESAIRTIHGAGIEVMEIIDVTPMPHNGCRPPKKRRV</sequence>
<dbReference type="EMBL" id="AE015924">
    <property type="protein sequence ID" value="AAQ66894.1"/>
    <property type="molecule type" value="Genomic_DNA"/>
</dbReference>
<dbReference type="RefSeq" id="WP_004583574.1">
    <property type="nucleotide sequence ID" value="NC_002950.2"/>
</dbReference>
<dbReference type="SMR" id="Q7MTN8"/>
<dbReference type="STRING" id="242619.PG_1913"/>
<dbReference type="EnsemblBacteria" id="AAQ66894">
    <property type="protein sequence ID" value="AAQ66894"/>
    <property type="gene ID" value="PG_1913"/>
</dbReference>
<dbReference type="GeneID" id="29256995"/>
<dbReference type="KEGG" id="pgi:PG_1913"/>
<dbReference type="eggNOG" id="COG0100">
    <property type="taxonomic scope" value="Bacteria"/>
</dbReference>
<dbReference type="HOGENOM" id="CLU_072439_5_3_10"/>
<dbReference type="Proteomes" id="UP000000588">
    <property type="component" value="Chromosome"/>
</dbReference>
<dbReference type="GO" id="GO:1990904">
    <property type="term" value="C:ribonucleoprotein complex"/>
    <property type="evidence" value="ECO:0007669"/>
    <property type="project" value="UniProtKB-KW"/>
</dbReference>
<dbReference type="GO" id="GO:0005840">
    <property type="term" value="C:ribosome"/>
    <property type="evidence" value="ECO:0007669"/>
    <property type="project" value="UniProtKB-KW"/>
</dbReference>
<dbReference type="GO" id="GO:0019843">
    <property type="term" value="F:rRNA binding"/>
    <property type="evidence" value="ECO:0007669"/>
    <property type="project" value="UniProtKB-UniRule"/>
</dbReference>
<dbReference type="GO" id="GO:0003735">
    <property type="term" value="F:structural constituent of ribosome"/>
    <property type="evidence" value="ECO:0007669"/>
    <property type="project" value="InterPro"/>
</dbReference>
<dbReference type="GO" id="GO:0006412">
    <property type="term" value="P:translation"/>
    <property type="evidence" value="ECO:0007669"/>
    <property type="project" value="UniProtKB-UniRule"/>
</dbReference>
<dbReference type="FunFam" id="3.30.420.80:FF:000004">
    <property type="entry name" value="30S ribosomal protein S11"/>
    <property type="match status" value="1"/>
</dbReference>
<dbReference type="Gene3D" id="3.30.420.80">
    <property type="entry name" value="Ribosomal protein S11"/>
    <property type="match status" value="1"/>
</dbReference>
<dbReference type="HAMAP" id="MF_01310">
    <property type="entry name" value="Ribosomal_uS11"/>
    <property type="match status" value="1"/>
</dbReference>
<dbReference type="InterPro" id="IPR001971">
    <property type="entry name" value="Ribosomal_uS11"/>
</dbReference>
<dbReference type="InterPro" id="IPR019981">
    <property type="entry name" value="Ribosomal_uS11_bac-type"/>
</dbReference>
<dbReference type="InterPro" id="IPR018102">
    <property type="entry name" value="Ribosomal_uS11_CS"/>
</dbReference>
<dbReference type="InterPro" id="IPR036967">
    <property type="entry name" value="Ribosomal_uS11_sf"/>
</dbReference>
<dbReference type="NCBIfam" id="NF003698">
    <property type="entry name" value="PRK05309.1"/>
    <property type="match status" value="1"/>
</dbReference>
<dbReference type="NCBIfam" id="TIGR03632">
    <property type="entry name" value="uS11_bact"/>
    <property type="match status" value="1"/>
</dbReference>
<dbReference type="PANTHER" id="PTHR11759">
    <property type="entry name" value="40S RIBOSOMAL PROTEIN S14/30S RIBOSOMAL PROTEIN S11"/>
    <property type="match status" value="1"/>
</dbReference>
<dbReference type="Pfam" id="PF00411">
    <property type="entry name" value="Ribosomal_S11"/>
    <property type="match status" value="1"/>
</dbReference>
<dbReference type="PIRSF" id="PIRSF002131">
    <property type="entry name" value="Ribosomal_S11"/>
    <property type="match status" value="1"/>
</dbReference>
<dbReference type="SUPFAM" id="SSF53137">
    <property type="entry name" value="Translational machinery components"/>
    <property type="match status" value="1"/>
</dbReference>
<dbReference type="PROSITE" id="PS00054">
    <property type="entry name" value="RIBOSOMAL_S11"/>
    <property type="match status" value="1"/>
</dbReference>
<organism>
    <name type="scientific">Porphyromonas gingivalis (strain ATCC BAA-308 / W83)</name>
    <dbReference type="NCBI Taxonomy" id="242619"/>
    <lineage>
        <taxon>Bacteria</taxon>
        <taxon>Pseudomonadati</taxon>
        <taxon>Bacteroidota</taxon>
        <taxon>Bacteroidia</taxon>
        <taxon>Bacteroidales</taxon>
        <taxon>Porphyromonadaceae</taxon>
        <taxon>Porphyromonas</taxon>
    </lineage>
</organism>
<name>RS11_PORGI</name>
<accession>Q7MTN8</accession>
<reference key="1">
    <citation type="journal article" date="2003" name="J. Bacteriol.">
        <title>Complete genome sequence of the oral pathogenic bacterium Porphyromonas gingivalis strain W83.</title>
        <authorList>
            <person name="Nelson K.E."/>
            <person name="Fleischmann R.D."/>
            <person name="DeBoy R.T."/>
            <person name="Paulsen I.T."/>
            <person name="Fouts D.E."/>
            <person name="Eisen J.A."/>
            <person name="Daugherty S.C."/>
            <person name="Dodson R.J."/>
            <person name="Durkin A.S."/>
            <person name="Gwinn M.L."/>
            <person name="Haft D.H."/>
            <person name="Kolonay J.F."/>
            <person name="Nelson W.C."/>
            <person name="Mason T.M."/>
            <person name="Tallon L."/>
            <person name="Gray J."/>
            <person name="Granger D."/>
            <person name="Tettelin H."/>
            <person name="Dong H."/>
            <person name="Galvin J.L."/>
            <person name="Duncan M.J."/>
            <person name="Dewhirst F.E."/>
            <person name="Fraser C.M."/>
        </authorList>
    </citation>
    <scope>NUCLEOTIDE SEQUENCE [LARGE SCALE GENOMIC DNA]</scope>
    <source>
        <strain>ATCC BAA-308 / W83</strain>
    </source>
</reference>
<protein>
    <recommendedName>
        <fullName evidence="1">Small ribosomal subunit protein uS11</fullName>
    </recommendedName>
    <alternativeName>
        <fullName evidence="2">30S ribosomal protein S11</fullName>
    </alternativeName>
</protein>
<proteinExistence type="inferred from homology"/>
<comment type="function">
    <text evidence="1">Located on the platform of the 30S subunit, it bridges several disparate RNA helices of the 16S rRNA. Forms part of the Shine-Dalgarno cleft in the 70S ribosome.</text>
</comment>
<comment type="subunit">
    <text evidence="1">Part of the 30S ribosomal subunit. Interacts with proteins S7 and S18. Binds to IF-3.</text>
</comment>
<comment type="similarity">
    <text evidence="1">Belongs to the universal ribosomal protein uS11 family.</text>
</comment>